<feature type="signal peptide" evidence="4">
    <location>
        <begin position="1"/>
        <end position="29"/>
    </location>
</feature>
<feature type="propeptide" id="PRO_0000015391" evidence="5">
    <location>
        <begin position="30"/>
        <end position="48"/>
    </location>
</feature>
<feature type="chain" id="PRO_0000015392" description="Interleukin-15">
    <location>
        <begin position="49"/>
        <end position="162"/>
    </location>
</feature>
<feature type="glycosylation site" description="N-linked (GlcNAc...) asparagine" evidence="4">
    <location>
        <position position="127"/>
    </location>
</feature>
<feature type="disulfide bond" evidence="1">
    <location>
        <begin position="83"/>
        <end position="133"/>
    </location>
</feature>
<feature type="disulfide bond" evidence="1">
    <location>
        <begin position="90"/>
        <end position="136"/>
    </location>
</feature>
<protein>
    <recommendedName>
        <fullName>Interleukin-15</fullName>
        <shortName>IL-15</shortName>
    </recommendedName>
</protein>
<proteinExistence type="evidence at protein level"/>
<gene>
    <name type="primary">IL15</name>
</gene>
<sequence length="162" mass="18222">MRISKPHLRSISIQCYLCLLLKSHFLTEAGIHVFILGCFSAGLPKTEANWVNVISDLKKIEDLIQSMHIDATLYTESDVHPSCKVTAMKCFLLELQVISHESGDTDIHDTVENLIILANNILSSNGNITESGCKECEELEEKNIKEFLQSFVHIVQMFINTS</sequence>
<reference key="1">
    <citation type="journal article" date="1994" name="Science">
        <title>Cloning of a T cell growth factor that interacts with the beta chain of the interleukin-2 receptor.</title>
        <authorList>
            <person name="Grabstein K.H."/>
            <person name="Eisenman J."/>
            <person name="Shanebeck K."/>
            <person name="Rauch C."/>
            <person name="Srinivasan S."/>
            <person name="Fung V."/>
            <person name="Beers C."/>
            <person name="Richardson J."/>
            <person name="Schoenborn M.A."/>
            <person name="Ahdieh M."/>
            <person name="Johnson L."/>
            <person name="Alderson M.R."/>
            <person name="Watson J.D."/>
            <person name="Anderson D.M."/>
            <person name="Giri J.G."/>
        </authorList>
    </citation>
    <scope>NUCLEOTIDE SEQUENCE [MRNA]</scope>
    <scope>PROTEIN SEQUENCE OF 49-81</scope>
    <source>
        <tissue>Kidney</tissue>
    </source>
</reference>
<organism>
    <name type="scientific">Chlorocebus aethiops</name>
    <name type="common">Green monkey</name>
    <name type="synonym">Cercopithecus aethiops</name>
    <dbReference type="NCBI Taxonomy" id="9534"/>
    <lineage>
        <taxon>Eukaryota</taxon>
        <taxon>Metazoa</taxon>
        <taxon>Chordata</taxon>
        <taxon>Craniata</taxon>
        <taxon>Vertebrata</taxon>
        <taxon>Euteleostomi</taxon>
        <taxon>Mammalia</taxon>
        <taxon>Eutheria</taxon>
        <taxon>Euarchontoglires</taxon>
        <taxon>Primates</taxon>
        <taxon>Haplorrhini</taxon>
        <taxon>Catarrhini</taxon>
        <taxon>Cercopithecidae</taxon>
        <taxon>Cercopithecinae</taxon>
        <taxon>Chlorocebus</taxon>
    </lineage>
</organism>
<evidence type="ECO:0000250" key="1"/>
<evidence type="ECO:0000250" key="2">
    <source>
        <dbReference type="UniProtKB" id="P40933"/>
    </source>
</evidence>
<evidence type="ECO:0000250" key="3">
    <source>
        <dbReference type="UniProtKB" id="P48346"/>
    </source>
</evidence>
<evidence type="ECO:0000255" key="4"/>
<evidence type="ECO:0000269" key="5">
    <source>
    </source>
</evidence>
<evidence type="ECO:0000305" key="6"/>
<comment type="function">
    <text evidence="2 3">Cytokine that plays a major role in the development of inflammatory and protective immune responses to microbial invaders and parasites by modulating immune cells of both the innate and adaptive immune systems. Stimulates the proliferation of natural killer cells, T-cells and B-cells and promotes the secretion of several cytokines. In monocytes, induces the production of IL8 and monocyte chemotactic protein 1/CCL2, two chemokines that attract neutrophils and monocytes respectively to sites of infection. Unlike most cytokines, which are secreted in soluble form, IL15 is expressed in association with its high affinity IL15RA on the surface of IL15-producing cells and delivers signals to target cells that express IL2RB and IL2RG receptor subunits. Binding to its receptor triggers the phosphorylation of JAK1 and JAK3 and the recruitment and subsequent phosphorylation of signal transducer and activator of transcription-3/STAT3 and STAT5 (By similarity). In mast cells, induces the rapid tyrosine phosphorylation of STAT6 and thereby controls mast cell survival and release of cytokines such as IL4 (By similarity).</text>
</comment>
<comment type="subcellular location">
    <subcellularLocation>
        <location>Secreted</location>
    </subcellularLocation>
</comment>
<comment type="similarity">
    <text evidence="6">Belongs to the IL-15/IL-21 family.</text>
</comment>
<accession>P40221</accession>
<name>IL15_CHLAE</name>
<dbReference type="EMBL" id="U03099">
    <property type="protein sequence ID" value="AAA18416.1"/>
    <property type="molecule type" value="mRNA"/>
</dbReference>
<dbReference type="PIR" id="A53484">
    <property type="entry name" value="A53484"/>
</dbReference>
<dbReference type="SMR" id="P40221"/>
<dbReference type="GlyCosmos" id="P40221">
    <property type="glycosylation" value="1 site, No reported glycans"/>
</dbReference>
<dbReference type="GO" id="GO:0005615">
    <property type="term" value="C:extracellular space"/>
    <property type="evidence" value="ECO:0007669"/>
    <property type="project" value="UniProtKB-KW"/>
</dbReference>
<dbReference type="GO" id="GO:0005125">
    <property type="term" value="F:cytokine activity"/>
    <property type="evidence" value="ECO:0007669"/>
    <property type="project" value="UniProtKB-KW"/>
</dbReference>
<dbReference type="GO" id="GO:0005126">
    <property type="term" value="F:cytokine receptor binding"/>
    <property type="evidence" value="ECO:0007669"/>
    <property type="project" value="InterPro"/>
</dbReference>
<dbReference type="GO" id="GO:0006955">
    <property type="term" value="P:immune response"/>
    <property type="evidence" value="ECO:0007669"/>
    <property type="project" value="InterPro"/>
</dbReference>
<dbReference type="GO" id="GO:0035723">
    <property type="term" value="P:interleukin-15-mediated signaling pathway"/>
    <property type="evidence" value="ECO:0000250"/>
    <property type="project" value="UniProtKB"/>
</dbReference>
<dbReference type="GO" id="GO:0042119">
    <property type="term" value="P:neutrophil activation"/>
    <property type="evidence" value="ECO:0000250"/>
    <property type="project" value="UniProtKB"/>
</dbReference>
<dbReference type="GO" id="GO:0001819">
    <property type="term" value="P:positive regulation of cytokine production"/>
    <property type="evidence" value="ECO:0007669"/>
    <property type="project" value="TreeGrafter"/>
</dbReference>
<dbReference type="GO" id="GO:0050778">
    <property type="term" value="P:positive regulation of immune response"/>
    <property type="evidence" value="ECO:0007669"/>
    <property type="project" value="TreeGrafter"/>
</dbReference>
<dbReference type="GO" id="GO:0050731">
    <property type="term" value="P:positive regulation of peptidyl-tyrosine phosphorylation"/>
    <property type="evidence" value="ECO:0000250"/>
    <property type="project" value="UniProtKB"/>
</dbReference>
<dbReference type="GO" id="GO:0050766">
    <property type="term" value="P:positive regulation of phagocytosis"/>
    <property type="evidence" value="ECO:0000250"/>
    <property type="project" value="UniProtKB"/>
</dbReference>
<dbReference type="GO" id="GO:0042102">
    <property type="term" value="P:positive regulation of T cell proliferation"/>
    <property type="evidence" value="ECO:0007669"/>
    <property type="project" value="TreeGrafter"/>
</dbReference>
<dbReference type="FunFam" id="1.20.1250.70:FF:000001">
    <property type="entry name" value="Interleukin"/>
    <property type="match status" value="1"/>
</dbReference>
<dbReference type="Gene3D" id="1.20.1250.70">
    <property type="entry name" value="Interleukin-15/Interleukin-21"/>
    <property type="match status" value="1"/>
</dbReference>
<dbReference type="InterPro" id="IPR009079">
    <property type="entry name" value="4_helix_cytokine-like_core"/>
</dbReference>
<dbReference type="InterPro" id="IPR020439">
    <property type="entry name" value="IL-15"/>
</dbReference>
<dbReference type="InterPro" id="IPR003443">
    <property type="entry name" value="IL-15/IL-21_fam"/>
</dbReference>
<dbReference type="InterPro" id="IPR020466">
    <property type="entry name" value="IL-15_mml"/>
</dbReference>
<dbReference type="PANTHER" id="PTHR14356:SF3">
    <property type="entry name" value="INTERLEUKIN-15"/>
    <property type="match status" value="1"/>
</dbReference>
<dbReference type="PANTHER" id="PTHR14356">
    <property type="entry name" value="INTERLEUKIN-15-RELATED"/>
    <property type="match status" value="1"/>
</dbReference>
<dbReference type="Pfam" id="PF02372">
    <property type="entry name" value="IL15"/>
    <property type="match status" value="1"/>
</dbReference>
<dbReference type="PRINTS" id="PR01947">
    <property type="entry name" value="INTLKN15MAML"/>
</dbReference>
<dbReference type="PRINTS" id="PR01930">
    <property type="entry name" value="INTRLEUKIN15"/>
</dbReference>
<dbReference type="SUPFAM" id="SSF47266">
    <property type="entry name" value="4-helical cytokines"/>
    <property type="match status" value="1"/>
</dbReference>
<keyword id="KW-0202">Cytokine</keyword>
<keyword id="KW-0903">Direct protein sequencing</keyword>
<keyword id="KW-1015">Disulfide bond</keyword>
<keyword id="KW-0325">Glycoprotein</keyword>
<keyword id="KW-0964">Secreted</keyword>
<keyword id="KW-0732">Signal</keyword>